<comment type="function">
    <text evidence="1">Catalyzes the attachment of glutamate to tRNA(Glu) in a two-step reaction: glutamate is first activated by ATP to form Glu-AMP and then transferred to the acceptor end of tRNA(Glu).</text>
</comment>
<comment type="catalytic activity">
    <reaction evidence="1">
        <text>tRNA(Glu) + L-glutamate + ATP = L-glutamyl-tRNA(Glu) + AMP + diphosphate</text>
        <dbReference type="Rhea" id="RHEA:23540"/>
        <dbReference type="Rhea" id="RHEA-COMP:9663"/>
        <dbReference type="Rhea" id="RHEA-COMP:9680"/>
        <dbReference type="ChEBI" id="CHEBI:29985"/>
        <dbReference type="ChEBI" id="CHEBI:30616"/>
        <dbReference type="ChEBI" id="CHEBI:33019"/>
        <dbReference type="ChEBI" id="CHEBI:78442"/>
        <dbReference type="ChEBI" id="CHEBI:78520"/>
        <dbReference type="ChEBI" id="CHEBI:456215"/>
        <dbReference type="EC" id="6.1.1.17"/>
    </reaction>
</comment>
<comment type="subcellular location">
    <subcellularLocation>
        <location evidence="1">Cytoplasm</location>
    </subcellularLocation>
</comment>
<comment type="similarity">
    <text evidence="1">Belongs to the class-I aminoacyl-tRNA synthetase family. Glutamate--tRNA ligase type 2 subfamily.</text>
</comment>
<evidence type="ECO:0000255" key="1">
    <source>
        <dbReference type="HAMAP-Rule" id="MF_02076"/>
    </source>
</evidence>
<reference key="1">
    <citation type="journal article" date="1996" name="Science">
        <title>Complete genome sequence of the methanogenic archaeon, Methanococcus jannaschii.</title>
        <authorList>
            <person name="Bult C.J."/>
            <person name="White O."/>
            <person name="Olsen G.J."/>
            <person name="Zhou L."/>
            <person name="Fleischmann R.D."/>
            <person name="Sutton G.G."/>
            <person name="Blake J.A."/>
            <person name="FitzGerald L.M."/>
            <person name="Clayton R.A."/>
            <person name="Gocayne J.D."/>
            <person name="Kerlavage A.R."/>
            <person name="Dougherty B.A."/>
            <person name="Tomb J.-F."/>
            <person name="Adams M.D."/>
            <person name="Reich C.I."/>
            <person name="Overbeek R."/>
            <person name="Kirkness E.F."/>
            <person name="Weinstock K.G."/>
            <person name="Merrick J.M."/>
            <person name="Glodek A."/>
            <person name="Scott J.L."/>
            <person name="Geoghagen N.S.M."/>
            <person name="Weidman J.F."/>
            <person name="Fuhrmann J.L."/>
            <person name="Nguyen D."/>
            <person name="Utterback T.R."/>
            <person name="Kelley J.M."/>
            <person name="Peterson J.D."/>
            <person name="Sadow P.W."/>
            <person name="Hanna M.C."/>
            <person name="Cotton M.D."/>
            <person name="Roberts K.M."/>
            <person name="Hurst M.A."/>
            <person name="Kaine B.P."/>
            <person name="Borodovsky M."/>
            <person name="Klenk H.-P."/>
            <person name="Fraser C.M."/>
            <person name="Smith H.O."/>
            <person name="Woese C.R."/>
            <person name="Venter J.C."/>
        </authorList>
    </citation>
    <scope>NUCLEOTIDE SEQUENCE [LARGE SCALE GENOMIC DNA]</scope>
    <source>
        <strain>ATCC 43067 / DSM 2661 / JAL-1 / JCM 10045 / NBRC 100440</strain>
    </source>
</reference>
<organism>
    <name type="scientific">Methanocaldococcus jannaschii (strain ATCC 43067 / DSM 2661 / JAL-1 / JCM 10045 / NBRC 100440)</name>
    <name type="common">Methanococcus jannaschii</name>
    <dbReference type="NCBI Taxonomy" id="243232"/>
    <lineage>
        <taxon>Archaea</taxon>
        <taxon>Methanobacteriati</taxon>
        <taxon>Methanobacteriota</taxon>
        <taxon>Methanomada group</taxon>
        <taxon>Methanococci</taxon>
        <taxon>Methanococcales</taxon>
        <taxon>Methanocaldococcaceae</taxon>
        <taxon>Methanocaldococcus</taxon>
    </lineage>
</organism>
<keyword id="KW-0030">Aminoacyl-tRNA synthetase</keyword>
<keyword id="KW-0067">ATP-binding</keyword>
<keyword id="KW-0963">Cytoplasm</keyword>
<keyword id="KW-0436">Ligase</keyword>
<keyword id="KW-0547">Nucleotide-binding</keyword>
<keyword id="KW-0648">Protein biosynthesis</keyword>
<keyword id="KW-1185">Reference proteome</keyword>
<dbReference type="EC" id="6.1.1.17" evidence="1"/>
<dbReference type="EMBL" id="L77117">
    <property type="protein sequence ID" value="AAB99384.1"/>
    <property type="molecule type" value="Genomic_DNA"/>
</dbReference>
<dbReference type="PIR" id="H64471">
    <property type="entry name" value="H64471"/>
</dbReference>
<dbReference type="RefSeq" id="WP_010870894.1">
    <property type="nucleotide sequence ID" value="NC_000909.1"/>
</dbReference>
<dbReference type="SMR" id="Q58772"/>
<dbReference type="FunCoup" id="Q58772">
    <property type="interactions" value="343"/>
</dbReference>
<dbReference type="STRING" id="243232.MJ_1377"/>
<dbReference type="PaxDb" id="243232-MJ_1377"/>
<dbReference type="EnsemblBacteria" id="AAB99384">
    <property type="protein sequence ID" value="AAB99384"/>
    <property type="gene ID" value="MJ_1377"/>
</dbReference>
<dbReference type="GeneID" id="1452280"/>
<dbReference type="KEGG" id="mja:MJ_1377"/>
<dbReference type="eggNOG" id="arCOG04302">
    <property type="taxonomic scope" value="Archaea"/>
</dbReference>
<dbReference type="HOGENOM" id="CLU_001882_1_3_2"/>
<dbReference type="InParanoid" id="Q58772"/>
<dbReference type="OrthoDB" id="10470at2157"/>
<dbReference type="PhylomeDB" id="Q58772"/>
<dbReference type="Proteomes" id="UP000000805">
    <property type="component" value="Chromosome"/>
</dbReference>
<dbReference type="GO" id="GO:0005829">
    <property type="term" value="C:cytosol"/>
    <property type="evidence" value="ECO:0000318"/>
    <property type="project" value="GO_Central"/>
</dbReference>
<dbReference type="GO" id="GO:0032991">
    <property type="term" value="C:protein-containing complex"/>
    <property type="evidence" value="ECO:0007669"/>
    <property type="project" value="UniProtKB-ARBA"/>
</dbReference>
<dbReference type="GO" id="GO:0005524">
    <property type="term" value="F:ATP binding"/>
    <property type="evidence" value="ECO:0007669"/>
    <property type="project" value="UniProtKB-UniRule"/>
</dbReference>
<dbReference type="GO" id="GO:0004818">
    <property type="term" value="F:glutamate-tRNA ligase activity"/>
    <property type="evidence" value="ECO:0007669"/>
    <property type="project" value="UniProtKB-UniRule"/>
</dbReference>
<dbReference type="GO" id="GO:0006424">
    <property type="term" value="P:glutamyl-tRNA aminoacylation"/>
    <property type="evidence" value="ECO:0007669"/>
    <property type="project" value="UniProtKB-UniRule"/>
</dbReference>
<dbReference type="CDD" id="cd09287">
    <property type="entry name" value="GluRS_non_core"/>
    <property type="match status" value="1"/>
</dbReference>
<dbReference type="FunFam" id="2.40.240.100:FF:000001">
    <property type="entry name" value="Glutamate--tRNA ligase"/>
    <property type="match status" value="1"/>
</dbReference>
<dbReference type="FunFam" id="2.40.240.10:FF:000033">
    <property type="entry name" value="Glutamate--tRNA ligase"/>
    <property type="match status" value="1"/>
</dbReference>
<dbReference type="FunFam" id="3.40.50.620:FF:000222">
    <property type="entry name" value="Glutamate--tRNA ligase"/>
    <property type="match status" value="1"/>
</dbReference>
<dbReference type="FunFam" id="3.90.800.10:FF:000001">
    <property type="entry name" value="Glutamine--tRNA ligase"/>
    <property type="match status" value="1"/>
</dbReference>
<dbReference type="Gene3D" id="2.40.240.100">
    <property type="match status" value="1"/>
</dbReference>
<dbReference type="Gene3D" id="3.40.50.620">
    <property type="entry name" value="HUPs"/>
    <property type="match status" value="1"/>
</dbReference>
<dbReference type="Gene3D" id="2.40.240.10">
    <property type="entry name" value="Ribosomal Protein L25, Chain P"/>
    <property type="match status" value="1"/>
</dbReference>
<dbReference type="HAMAP" id="MF_02076">
    <property type="entry name" value="Glu_tRNA_synth_type2"/>
    <property type="match status" value="1"/>
</dbReference>
<dbReference type="InterPro" id="IPR001412">
    <property type="entry name" value="aa-tRNA-synth_I_CS"/>
</dbReference>
<dbReference type="InterPro" id="IPR050132">
    <property type="entry name" value="Gln/Glu-tRNA_Ligase"/>
</dbReference>
<dbReference type="InterPro" id="IPR004526">
    <property type="entry name" value="Glu-tRNA-synth_arc/euk"/>
</dbReference>
<dbReference type="InterPro" id="IPR000924">
    <property type="entry name" value="Glu/Gln-tRNA-synth"/>
</dbReference>
<dbReference type="InterPro" id="IPR020058">
    <property type="entry name" value="Glu/Gln-tRNA-synth_Ib_cat-dom"/>
</dbReference>
<dbReference type="InterPro" id="IPR020059">
    <property type="entry name" value="Glu/Gln-tRNA-synth_Ib_codon-bd"/>
</dbReference>
<dbReference type="InterPro" id="IPR020056">
    <property type="entry name" value="Rbsml_bL25/Gln-tRNA_synth_N"/>
</dbReference>
<dbReference type="InterPro" id="IPR011035">
    <property type="entry name" value="Ribosomal_bL25/Gln-tRNA_synth"/>
</dbReference>
<dbReference type="InterPro" id="IPR014729">
    <property type="entry name" value="Rossmann-like_a/b/a_fold"/>
</dbReference>
<dbReference type="InterPro" id="IPR049437">
    <property type="entry name" value="tRNA-synt_1c_C2"/>
</dbReference>
<dbReference type="NCBIfam" id="TIGR00463">
    <property type="entry name" value="gltX_arch"/>
    <property type="match status" value="1"/>
</dbReference>
<dbReference type="NCBIfam" id="NF003169">
    <property type="entry name" value="PRK04156.1"/>
    <property type="match status" value="1"/>
</dbReference>
<dbReference type="PANTHER" id="PTHR43097:SF5">
    <property type="entry name" value="GLUTAMATE--TRNA LIGASE"/>
    <property type="match status" value="1"/>
</dbReference>
<dbReference type="PANTHER" id="PTHR43097">
    <property type="entry name" value="GLUTAMINE-TRNA LIGASE"/>
    <property type="match status" value="1"/>
</dbReference>
<dbReference type="Pfam" id="PF00749">
    <property type="entry name" value="tRNA-synt_1c"/>
    <property type="match status" value="1"/>
</dbReference>
<dbReference type="Pfam" id="PF03950">
    <property type="entry name" value="tRNA-synt_1c_C"/>
    <property type="match status" value="1"/>
</dbReference>
<dbReference type="Pfam" id="PF20974">
    <property type="entry name" value="tRNA-synt_1c_C2"/>
    <property type="match status" value="1"/>
</dbReference>
<dbReference type="PRINTS" id="PR00987">
    <property type="entry name" value="TRNASYNTHGLU"/>
</dbReference>
<dbReference type="SUPFAM" id="SSF52374">
    <property type="entry name" value="Nucleotidylyl transferase"/>
    <property type="match status" value="1"/>
</dbReference>
<dbReference type="SUPFAM" id="SSF50715">
    <property type="entry name" value="Ribosomal protein L25-like"/>
    <property type="match status" value="1"/>
</dbReference>
<dbReference type="PROSITE" id="PS00178">
    <property type="entry name" value="AA_TRNA_LIGASE_I"/>
    <property type="match status" value="1"/>
</dbReference>
<name>SYE_METJA</name>
<proteinExistence type="inferred from homology"/>
<accession>Q58772</accession>
<sequence>MEEKILPIALRNAIKYNGKANPKAVLGIFLSENPEYRSKAKEVMPIVEKVVEEVNKLSLDEIKKKLEELGEDVKKKEKKEKGLELPNVKDKVVMRFAPNPSGPLHIGHARAAVLNDYFVKKYGGKLILRLEDTDPKRVLPEAYDMIKEDLDWLGVKVDEVVIQSDRIELYYEYGRKLIEMGHAYVCDCNPEEFRELRNKGVPCKCRDRAIEDNLELWEKMLNGELENVAVRLKTDIKHKNPSIRDFPIFRVEKTPHPRTGDKYCVYPLMNFSVPVDDHLLGMTHVLRGKDHIVNTEKQAYIYKYFGWEMPEFIHYGILKIEDIVLSTSSMYKGIKEGLYSGWDDVRLGTLRALRRRGIKPEAIYEIMKRIGIKQADVKFSWENLYAINKELIDKDARRFFFVWNPKKLIIEGAEKKVLKLRMHPDRPEFGERELIFDGEVYVVGDELEENKMYRLMELFNIVVEKVDDIALAKYHSDDFKIARKNKAKIIHWIPVKDSVKVKVLMPDGEIKEGFAEKDFAKVEVDDIIQFERFGFVRIDKKDNDGFVCCYAHR</sequence>
<gene>
    <name evidence="1" type="primary">gltX</name>
    <name type="ordered locus">MJ1377</name>
</gene>
<feature type="chain" id="PRO_0000119717" description="Glutamate--tRNA ligase">
    <location>
        <begin position="1"/>
        <end position="553"/>
    </location>
</feature>
<feature type="short sequence motif" description="'HIGH' region" evidence="1">
    <location>
        <begin position="98"/>
        <end position="108"/>
    </location>
</feature>
<protein>
    <recommendedName>
        <fullName evidence="1">Glutamate--tRNA ligase</fullName>
        <ecNumber evidence="1">6.1.1.17</ecNumber>
    </recommendedName>
    <alternativeName>
        <fullName evidence="1">Glutamyl-tRNA synthetase</fullName>
        <shortName evidence="1">GluRS</shortName>
    </alternativeName>
</protein>